<keyword id="KW-0687">Ribonucleoprotein</keyword>
<keyword id="KW-0689">Ribosomal protein</keyword>
<keyword id="KW-0694">RNA-binding</keyword>
<keyword id="KW-0699">rRNA-binding</keyword>
<feature type="chain" id="PRO_1000166018" description="Large ribosomal subunit protein uL4">
    <location>
        <begin position="1"/>
        <end position="230"/>
    </location>
</feature>
<feature type="region of interest" description="Disordered" evidence="2">
    <location>
        <begin position="51"/>
        <end position="105"/>
    </location>
</feature>
<dbReference type="EMBL" id="FM211192">
    <property type="protein sequence ID" value="CAR71958.1"/>
    <property type="molecule type" value="Genomic_DNA"/>
</dbReference>
<dbReference type="SMR" id="B8ZSB8"/>
<dbReference type="KEGG" id="mlb:MLBr01862"/>
<dbReference type="HOGENOM" id="CLU_041575_5_0_11"/>
<dbReference type="Proteomes" id="UP000006900">
    <property type="component" value="Chromosome"/>
</dbReference>
<dbReference type="GO" id="GO:1990904">
    <property type="term" value="C:ribonucleoprotein complex"/>
    <property type="evidence" value="ECO:0007669"/>
    <property type="project" value="UniProtKB-KW"/>
</dbReference>
<dbReference type="GO" id="GO:0005840">
    <property type="term" value="C:ribosome"/>
    <property type="evidence" value="ECO:0007669"/>
    <property type="project" value="UniProtKB-KW"/>
</dbReference>
<dbReference type="GO" id="GO:0019843">
    <property type="term" value="F:rRNA binding"/>
    <property type="evidence" value="ECO:0007669"/>
    <property type="project" value="UniProtKB-UniRule"/>
</dbReference>
<dbReference type="GO" id="GO:0003735">
    <property type="term" value="F:structural constituent of ribosome"/>
    <property type="evidence" value="ECO:0007669"/>
    <property type="project" value="InterPro"/>
</dbReference>
<dbReference type="GO" id="GO:0006412">
    <property type="term" value="P:translation"/>
    <property type="evidence" value="ECO:0007669"/>
    <property type="project" value="UniProtKB-UniRule"/>
</dbReference>
<dbReference type="FunFam" id="3.40.1370.10:FF:000004">
    <property type="entry name" value="50S ribosomal protein L4"/>
    <property type="match status" value="1"/>
</dbReference>
<dbReference type="Gene3D" id="3.40.1370.10">
    <property type="match status" value="1"/>
</dbReference>
<dbReference type="HAMAP" id="MF_01328_B">
    <property type="entry name" value="Ribosomal_uL4_B"/>
    <property type="match status" value="1"/>
</dbReference>
<dbReference type="InterPro" id="IPR002136">
    <property type="entry name" value="Ribosomal_uL4"/>
</dbReference>
<dbReference type="InterPro" id="IPR013005">
    <property type="entry name" value="Ribosomal_uL4-like"/>
</dbReference>
<dbReference type="InterPro" id="IPR023574">
    <property type="entry name" value="Ribosomal_uL4_dom_sf"/>
</dbReference>
<dbReference type="NCBIfam" id="TIGR03953">
    <property type="entry name" value="rplD_bact"/>
    <property type="match status" value="1"/>
</dbReference>
<dbReference type="PANTHER" id="PTHR10746">
    <property type="entry name" value="50S RIBOSOMAL PROTEIN L4"/>
    <property type="match status" value="1"/>
</dbReference>
<dbReference type="PANTHER" id="PTHR10746:SF6">
    <property type="entry name" value="LARGE RIBOSOMAL SUBUNIT PROTEIN UL4M"/>
    <property type="match status" value="1"/>
</dbReference>
<dbReference type="Pfam" id="PF00573">
    <property type="entry name" value="Ribosomal_L4"/>
    <property type="match status" value="1"/>
</dbReference>
<dbReference type="SUPFAM" id="SSF52166">
    <property type="entry name" value="Ribosomal protein L4"/>
    <property type="match status" value="1"/>
</dbReference>
<sequence>MAAKVENGSNIRKIDVKTPDGKVDGTIELPAELFDAPANIALMHQVVTAQRAAARQGTHSTKTRGDVSGGGRKPYRQKGTGRARQGSMRAPQFTGGGIVHGPKLRDYSQRTPKKMIAAALRGALSDRARNGRIHAVTELVVGKTPSTKSAKEFLGTLTDRKQVLVVIGRSDETGAKSVRNLPGVHLLSPDQLNTYDVLRADDLVFSVEALNSYIAAQQAAGTSTPEKVSA</sequence>
<comment type="function">
    <text evidence="1">One of the primary rRNA binding proteins, this protein initially binds near the 5'-end of the 23S rRNA. It is important during the early stages of 50S assembly. It makes multiple contacts with different domains of the 23S rRNA in the assembled 50S subunit and ribosome.</text>
</comment>
<comment type="function">
    <text evidence="1">Forms part of the polypeptide exit tunnel.</text>
</comment>
<comment type="subunit">
    <text evidence="1">Part of the 50S ribosomal subunit.</text>
</comment>
<comment type="similarity">
    <text evidence="1">Belongs to the universal ribosomal protein uL4 family.</text>
</comment>
<reference key="1">
    <citation type="journal article" date="2009" name="Nat. Genet.">
        <title>Comparative genomic and phylogeographic analysis of Mycobacterium leprae.</title>
        <authorList>
            <person name="Monot M."/>
            <person name="Honore N."/>
            <person name="Garnier T."/>
            <person name="Zidane N."/>
            <person name="Sherafi D."/>
            <person name="Paniz-Mondolfi A."/>
            <person name="Matsuoka M."/>
            <person name="Taylor G.M."/>
            <person name="Donoghue H.D."/>
            <person name="Bouwman A."/>
            <person name="Mays S."/>
            <person name="Watson C."/>
            <person name="Lockwood D."/>
            <person name="Khamispour A."/>
            <person name="Dowlati Y."/>
            <person name="Jianping S."/>
            <person name="Rea T.H."/>
            <person name="Vera-Cabrera L."/>
            <person name="Stefani M.M."/>
            <person name="Banu S."/>
            <person name="Macdonald M."/>
            <person name="Sapkota B.R."/>
            <person name="Spencer J.S."/>
            <person name="Thomas J."/>
            <person name="Harshman K."/>
            <person name="Singh P."/>
            <person name="Busso P."/>
            <person name="Gattiker A."/>
            <person name="Rougemont J."/>
            <person name="Brennan P.J."/>
            <person name="Cole S.T."/>
        </authorList>
    </citation>
    <scope>NUCLEOTIDE SEQUENCE [LARGE SCALE GENOMIC DNA]</scope>
    <source>
        <strain>Br4923</strain>
    </source>
</reference>
<gene>
    <name evidence="1" type="primary">rplD</name>
    <name type="ordered locus">MLBr01862</name>
</gene>
<evidence type="ECO:0000255" key="1">
    <source>
        <dbReference type="HAMAP-Rule" id="MF_01328"/>
    </source>
</evidence>
<evidence type="ECO:0000256" key="2">
    <source>
        <dbReference type="SAM" id="MobiDB-lite"/>
    </source>
</evidence>
<evidence type="ECO:0000305" key="3"/>
<proteinExistence type="inferred from homology"/>
<name>RL4_MYCLB</name>
<organism>
    <name type="scientific">Mycobacterium leprae (strain Br4923)</name>
    <dbReference type="NCBI Taxonomy" id="561304"/>
    <lineage>
        <taxon>Bacteria</taxon>
        <taxon>Bacillati</taxon>
        <taxon>Actinomycetota</taxon>
        <taxon>Actinomycetes</taxon>
        <taxon>Mycobacteriales</taxon>
        <taxon>Mycobacteriaceae</taxon>
        <taxon>Mycobacterium</taxon>
    </lineage>
</organism>
<protein>
    <recommendedName>
        <fullName evidence="1">Large ribosomal subunit protein uL4</fullName>
    </recommendedName>
    <alternativeName>
        <fullName evidence="3">50S ribosomal protein L4</fullName>
    </alternativeName>
</protein>
<accession>B8ZSB8</accession>